<accession>B9KAY3</accession>
<protein>
    <recommendedName>
        <fullName evidence="1">Polyamine aminopropyltransferase</fullName>
    </recommendedName>
    <alternativeName>
        <fullName evidence="1">Putrescine aminopropyltransferase</fullName>
        <shortName evidence="1">PAPT</shortName>
    </alternativeName>
    <alternativeName>
        <fullName evidence="1">Spermidine synthase</fullName>
        <shortName evidence="1">SPDS</shortName>
        <shortName evidence="1">SPDSY</shortName>
        <ecNumber evidence="1">2.5.1.16</ecNumber>
    </alternativeName>
</protein>
<proteinExistence type="inferred from homology"/>
<evidence type="ECO:0000255" key="1">
    <source>
        <dbReference type="HAMAP-Rule" id="MF_00198"/>
    </source>
</evidence>
<sequence>MCELKELERELQPRQHLWYFEYYTGNNVGLFMKMNRVIYSGQSDIQRIDIFENPDLGVVFALDGITMTTEKDEFMYHEMLAHVPMFLHPNPKKVLIIGGGDGGTLREVLKHDSVEKAILCEVDGLVIEAARKYLKQTSCGFDDPRAEIVIANGAEYVRKFKNEFDVIIIDSTDPTAGQGGHLFTEEFYQACYDALKEDGVFSAETEDPFYDIGWFKLAYKRISKVFPITKVYLGFMTTYPSGMWSYTFASKGIDPIKDFDPEKVRKFNKELKYYNEEVHVASFALPNFVKKELGLM</sequence>
<feature type="chain" id="PRO_1000124445" description="Polyamine aminopropyltransferase">
    <location>
        <begin position="1"/>
        <end position="296"/>
    </location>
</feature>
<feature type="domain" description="PABS" evidence="1">
    <location>
        <begin position="16"/>
        <end position="251"/>
    </location>
</feature>
<feature type="active site" description="Proton acceptor" evidence="1">
    <location>
        <position position="170"/>
    </location>
</feature>
<feature type="binding site" evidence="1">
    <location>
        <position position="46"/>
    </location>
    <ligand>
        <name>S-methyl-5'-thioadenosine</name>
        <dbReference type="ChEBI" id="CHEBI:17509"/>
    </ligand>
</feature>
<feature type="binding site" evidence="1">
    <location>
        <position position="77"/>
    </location>
    <ligand>
        <name>spermidine</name>
        <dbReference type="ChEBI" id="CHEBI:57834"/>
    </ligand>
</feature>
<feature type="binding site" evidence="1">
    <location>
        <position position="101"/>
    </location>
    <ligand>
        <name>spermidine</name>
        <dbReference type="ChEBI" id="CHEBI:57834"/>
    </ligand>
</feature>
<feature type="binding site" evidence="1">
    <location>
        <position position="121"/>
    </location>
    <ligand>
        <name>S-methyl-5'-thioadenosine</name>
        <dbReference type="ChEBI" id="CHEBI:17509"/>
    </ligand>
</feature>
<feature type="binding site" evidence="1">
    <location>
        <begin position="152"/>
        <end position="153"/>
    </location>
    <ligand>
        <name>S-methyl-5'-thioadenosine</name>
        <dbReference type="ChEBI" id="CHEBI:17509"/>
    </ligand>
</feature>
<feature type="binding site" evidence="1">
    <location>
        <begin position="170"/>
        <end position="173"/>
    </location>
    <ligand>
        <name>spermidine</name>
        <dbReference type="ChEBI" id="CHEBI:57834"/>
    </ligand>
</feature>
<reference key="1">
    <citation type="submission" date="2007-11" db="EMBL/GenBank/DDBJ databases">
        <title>The genome sequence of the hyperthermophilic bacterium Thermotoga neapolitana.</title>
        <authorList>
            <person name="Lim S.K."/>
            <person name="Kim J.S."/>
            <person name="Cha S.H."/>
            <person name="Park B.C."/>
            <person name="Lee D.S."/>
            <person name="Tae H.S."/>
            <person name="Kim S.-J."/>
            <person name="Kim J.J."/>
            <person name="Park K.J."/>
            <person name="Lee S.Y."/>
        </authorList>
    </citation>
    <scope>NUCLEOTIDE SEQUENCE [LARGE SCALE GENOMIC DNA]</scope>
    <source>
        <strain>ATCC 49049 / DSM 4359 / NBRC 107923 / NS-E</strain>
    </source>
</reference>
<gene>
    <name evidence="1" type="primary">speE</name>
    <name type="ordered locus">CTN_0003</name>
</gene>
<keyword id="KW-0963">Cytoplasm</keyword>
<keyword id="KW-0620">Polyamine biosynthesis</keyword>
<keyword id="KW-0745">Spermidine biosynthesis</keyword>
<keyword id="KW-0808">Transferase</keyword>
<comment type="function">
    <text evidence="1">Catalyzes the irreversible transfer of a propylamine group from the amino donor S-adenosylmethioninamine (decarboxy-AdoMet) to putrescine (1,4-diaminobutane) to yield spermidine.</text>
</comment>
<comment type="catalytic activity">
    <reaction evidence="1">
        <text>S-adenosyl 3-(methylsulfanyl)propylamine + putrescine = S-methyl-5'-thioadenosine + spermidine + H(+)</text>
        <dbReference type="Rhea" id="RHEA:12721"/>
        <dbReference type="ChEBI" id="CHEBI:15378"/>
        <dbReference type="ChEBI" id="CHEBI:17509"/>
        <dbReference type="ChEBI" id="CHEBI:57443"/>
        <dbReference type="ChEBI" id="CHEBI:57834"/>
        <dbReference type="ChEBI" id="CHEBI:326268"/>
        <dbReference type="EC" id="2.5.1.16"/>
    </reaction>
</comment>
<comment type="pathway">
    <text evidence="1">Amine and polyamine biosynthesis; spermidine biosynthesis; spermidine from putrescine: step 1/1.</text>
</comment>
<comment type="subunit">
    <text evidence="1">Homodimer or homotetramer.</text>
</comment>
<comment type="subcellular location">
    <subcellularLocation>
        <location evidence="1">Cytoplasm</location>
    </subcellularLocation>
</comment>
<comment type="similarity">
    <text evidence="1">Belongs to the spermidine/spermine synthase family.</text>
</comment>
<name>SPEE_THENN</name>
<dbReference type="EC" id="2.5.1.16" evidence="1"/>
<dbReference type="EMBL" id="CP000916">
    <property type="protein sequence ID" value="ACM22179.1"/>
    <property type="molecule type" value="Genomic_DNA"/>
</dbReference>
<dbReference type="SMR" id="B9KAY3"/>
<dbReference type="STRING" id="309803.CTN_0003"/>
<dbReference type="KEGG" id="tna:CTN_0003"/>
<dbReference type="eggNOG" id="COG0421">
    <property type="taxonomic scope" value="Bacteria"/>
</dbReference>
<dbReference type="HOGENOM" id="CLU_048199_0_0_0"/>
<dbReference type="UniPathway" id="UPA00248">
    <property type="reaction ID" value="UER00314"/>
</dbReference>
<dbReference type="Proteomes" id="UP000000445">
    <property type="component" value="Chromosome"/>
</dbReference>
<dbReference type="GO" id="GO:0005829">
    <property type="term" value="C:cytosol"/>
    <property type="evidence" value="ECO:0007669"/>
    <property type="project" value="TreeGrafter"/>
</dbReference>
<dbReference type="GO" id="GO:0004766">
    <property type="term" value="F:spermidine synthase activity"/>
    <property type="evidence" value="ECO:0007669"/>
    <property type="project" value="UniProtKB-UniRule"/>
</dbReference>
<dbReference type="GO" id="GO:0008295">
    <property type="term" value="P:spermidine biosynthetic process"/>
    <property type="evidence" value="ECO:0007669"/>
    <property type="project" value="UniProtKB-UniRule"/>
</dbReference>
<dbReference type="CDD" id="cd02440">
    <property type="entry name" value="AdoMet_MTases"/>
    <property type="match status" value="1"/>
</dbReference>
<dbReference type="FunFam" id="3.40.50.150:FF:000731">
    <property type="entry name" value="Polyamine aminopropyltransferase"/>
    <property type="match status" value="1"/>
</dbReference>
<dbReference type="Gene3D" id="2.30.140.10">
    <property type="entry name" value="Spermidine synthase, tetramerisation domain"/>
    <property type="match status" value="1"/>
</dbReference>
<dbReference type="Gene3D" id="3.40.50.150">
    <property type="entry name" value="Vaccinia Virus protein VP39"/>
    <property type="match status" value="1"/>
</dbReference>
<dbReference type="HAMAP" id="MF_00198">
    <property type="entry name" value="Spermidine_synth"/>
    <property type="match status" value="1"/>
</dbReference>
<dbReference type="InterPro" id="IPR030374">
    <property type="entry name" value="PABS"/>
</dbReference>
<dbReference type="InterPro" id="IPR030373">
    <property type="entry name" value="PABS_CS"/>
</dbReference>
<dbReference type="InterPro" id="IPR029063">
    <property type="entry name" value="SAM-dependent_MTases_sf"/>
</dbReference>
<dbReference type="InterPro" id="IPR001045">
    <property type="entry name" value="Spermi_synthase"/>
</dbReference>
<dbReference type="InterPro" id="IPR035246">
    <property type="entry name" value="Spermidine_synt_N"/>
</dbReference>
<dbReference type="InterPro" id="IPR037163">
    <property type="entry name" value="Spermidine_synt_N_sf"/>
</dbReference>
<dbReference type="NCBIfam" id="NF037959">
    <property type="entry name" value="MFS_SpdSyn"/>
    <property type="match status" value="1"/>
</dbReference>
<dbReference type="NCBIfam" id="NF002010">
    <property type="entry name" value="PRK00811.1"/>
    <property type="match status" value="1"/>
</dbReference>
<dbReference type="NCBIfam" id="TIGR00417">
    <property type="entry name" value="speE"/>
    <property type="match status" value="1"/>
</dbReference>
<dbReference type="PANTHER" id="PTHR11558:SF11">
    <property type="entry name" value="SPERMIDINE SYNTHASE"/>
    <property type="match status" value="1"/>
</dbReference>
<dbReference type="PANTHER" id="PTHR11558">
    <property type="entry name" value="SPERMIDINE/SPERMINE SYNTHASE"/>
    <property type="match status" value="1"/>
</dbReference>
<dbReference type="Pfam" id="PF17284">
    <property type="entry name" value="Spermine_synt_N"/>
    <property type="match status" value="1"/>
</dbReference>
<dbReference type="Pfam" id="PF01564">
    <property type="entry name" value="Spermine_synth"/>
    <property type="match status" value="1"/>
</dbReference>
<dbReference type="SUPFAM" id="SSF53335">
    <property type="entry name" value="S-adenosyl-L-methionine-dependent methyltransferases"/>
    <property type="match status" value="1"/>
</dbReference>
<dbReference type="PROSITE" id="PS01330">
    <property type="entry name" value="PABS_1"/>
    <property type="match status" value="1"/>
</dbReference>
<dbReference type="PROSITE" id="PS51006">
    <property type="entry name" value="PABS_2"/>
    <property type="match status" value="1"/>
</dbReference>
<organism>
    <name type="scientific">Thermotoga neapolitana (strain ATCC 49049 / DSM 4359 / NBRC 107923 / NS-E)</name>
    <dbReference type="NCBI Taxonomy" id="309803"/>
    <lineage>
        <taxon>Bacteria</taxon>
        <taxon>Thermotogati</taxon>
        <taxon>Thermotogota</taxon>
        <taxon>Thermotogae</taxon>
        <taxon>Thermotogales</taxon>
        <taxon>Thermotogaceae</taxon>
        <taxon>Thermotoga</taxon>
    </lineage>
</organism>